<reference key="1">
    <citation type="journal article" date="2009" name="Environ. Microbiol.">
        <title>Contribution of mobile genetic elements to Desulfovibrio vulgaris genome plasticity.</title>
        <authorList>
            <person name="Walker C.B."/>
            <person name="Stolyar S."/>
            <person name="Chivian D."/>
            <person name="Pinel N."/>
            <person name="Gabster J.A."/>
            <person name="Dehal P.S."/>
            <person name="He Z."/>
            <person name="Yang Z.K."/>
            <person name="Yen H.C."/>
            <person name="Zhou J."/>
            <person name="Wall J.D."/>
            <person name="Hazen T.C."/>
            <person name="Arkin A.P."/>
            <person name="Stahl D.A."/>
        </authorList>
    </citation>
    <scope>NUCLEOTIDE SEQUENCE [LARGE SCALE GENOMIC DNA]</scope>
    <source>
        <strain>DP4</strain>
    </source>
</reference>
<name>RLMH_NITV4</name>
<protein>
    <recommendedName>
        <fullName evidence="1">Ribosomal RNA large subunit methyltransferase H</fullName>
        <ecNumber evidence="1">2.1.1.177</ecNumber>
    </recommendedName>
    <alternativeName>
        <fullName evidence="1">23S rRNA (pseudouridine1915-N3)-methyltransferase</fullName>
    </alternativeName>
    <alternativeName>
        <fullName evidence="1">23S rRNA m3Psi1915 methyltransferase</fullName>
    </alternativeName>
    <alternativeName>
        <fullName evidence="1">rRNA (pseudouridine-N3-)-methyltransferase RlmH</fullName>
    </alternativeName>
</protein>
<proteinExistence type="inferred from homology"/>
<gene>
    <name evidence="1" type="primary">rlmH</name>
    <name type="ordered locus">Dvul_1809</name>
</gene>
<evidence type="ECO:0000255" key="1">
    <source>
        <dbReference type="HAMAP-Rule" id="MF_00658"/>
    </source>
</evidence>
<organism>
    <name type="scientific">Nitratidesulfovibrio vulgaris (strain DP4)</name>
    <name type="common">Desulfovibrio vulgaris</name>
    <dbReference type="NCBI Taxonomy" id="391774"/>
    <lineage>
        <taxon>Bacteria</taxon>
        <taxon>Pseudomonadati</taxon>
        <taxon>Thermodesulfobacteriota</taxon>
        <taxon>Desulfovibrionia</taxon>
        <taxon>Desulfovibrionales</taxon>
        <taxon>Desulfovibrionaceae</taxon>
        <taxon>Nitratidesulfovibrio</taxon>
    </lineage>
</organism>
<dbReference type="EC" id="2.1.1.177" evidence="1"/>
<dbReference type="EMBL" id="CP000527">
    <property type="protein sequence ID" value="ABM28826.1"/>
    <property type="molecule type" value="Genomic_DNA"/>
</dbReference>
<dbReference type="RefSeq" id="WP_010938550.1">
    <property type="nucleotide sequence ID" value="NC_008751.1"/>
</dbReference>
<dbReference type="SMR" id="A1VEG0"/>
<dbReference type="KEGG" id="dvl:Dvul_1809"/>
<dbReference type="HOGENOM" id="CLU_100552_1_0_7"/>
<dbReference type="Proteomes" id="UP000009173">
    <property type="component" value="Chromosome"/>
</dbReference>
<dbReference type="GO" id="GO:0005737">
    <property type="term" value="C:cytoplasm"/>
    <property type="evidence" value="ECO:0007669"/>
    <property type="project" value="UniProtKB-SubCell"/>
</dbReference>
<dbReference type="GO" id="GO:0070038">
    <property type="term" value="F:rRNA (pseudouridine-N3-)-methyltransferase activity"/>
    <property type="evidence" value="ECO:0007669"/>
    <property type="project" value="UniProtKB-UniRule"/>
</dbReference>
<dbReference type="CDD" id="cd18081">
    <property type="entry name" value="RlmH-like"/>
    <property type="match status" value="1"/>
</dbReference>
<dbReference type="Gene3D" id="3.40.1280.10">
    <property type="match status" value="1"/>
</dbReference>
<dbReference type="HAMAP" id="MF_00658">
    <property type="entry name" value="23SrRNA_methyltr_H"/>
    <property type="match status" value="1"/>
</dbReference>
<dbReference type="InterPro" id="IPR029028">
    <property type="entry name" value="Alpha/beta_knot_MTases"/>
</dbReference>
<dbReference type="InterPro" id="IPR003742">
    <property type="entry name" value="RlmH-like"/>
</dbReference>
<dbReference type="InterPro" id="IPR029026">
    <property type="entry name" value="tRNA_m1G_MTases_N"/>
</dbReference>
<dbReference type="PANTHER" id="PTHR33603">
    <property type="entry name" value="METHYLTRANSFERASE"/>
    <property type="match status" value="1"/>
</dbReference>
<dbReference type="PANTHER" id="PTHR33603:SF1">
    <property type="entry name" value="RIBOSOMAL RNA LARGE SUBUNIT METHYLTRANSFERASE H"/>
    <property type="match status" value="1"/>
</dbReference>
<dbReference type="Pfam" id="PF02590">
    <property type="entry name" value="SPOUT_MTase"/>
    <property type="match status" value="1"/>
</dbReference>
<dbReference type="PIRSF" id="PIRSF004505">
    <property type="entry name" value="MT_bac"/>
    <property type="match status" value="1"/>
</dbReference>
<dbReference type="SUPFAM" id="SSF75217">
    <property type="entry name" value="alpha/beta knot"/>
    <property type="match status" value="1"/>
</dbReference>
<feature type="chain" id="PRO_1000061778" description="Ribosomal RNA large subunit methyltransferase H">
    <location>
        <begin position="1"/>
        <end position="156"/>
    </location>
</feature>
<feature type="binding site" evidence="1">
    <location>
        <position position="72"/>
    </location>
    <ligand>
        <name>S-adenosyl-L-methionine</name>
        <dbReference type="ChEBI" id="CHEBI:59789"/>
    </ligand>
</feature>
<feature type="binding site" evidence="1">
    <location>
        <position position="104"/>
    </location>
    <ligand>
        <name>S-adenosyl-L-methionine</name>
        <dbReference type="ChEBI" id="CHEBI:59789"/>
    </ligand>
</feature>
<feature type="binding site" evidence="1">
    <location>
        <begin position="123"/>
        <end position="128"/>
    </location>
    <ligand>
        <name>S-adenosyl-L-methionine</name>
        <dbReference type="ChEBI" id="CHEBI:59789"/>
    </ligand>
</feature>
<accession>A1VEG0</accession>
<keyword id="KW-0963">Cytoplasm</keyword>
<keyword id="KW-0489">Methyltransferase</keyword>
<keyword id="KW-0698">rRNA processing</keyword>
<keyword id="KW-0949">S-adenosyl-L-methionine</keyword>
<keyword id="KW-0808">Transferase</keyword>
<sequence>MRTLRILAVGRIRTPFWQQAATHYMERIRHNCRLTETVVKDGGAALPPTARNADEGARLIAAMGPTDIVVCLDEHGRNMTSRDFAGFIERLTENATRTPCFVIGGAFGLDKSVLQRAEHKLALGPMTFPHEMARVVLLEQLYRADAILRGAPYHHD</sequence>
<comment type="function">
    <text evidence="1">Specifically methylates the pseudouridine at position 1915 (m3Psi1915) in 23S rRNA.</text>
</comment>
<comment type="catalytic activity">
    <reaction evidence="1">
        <text>pseudouridine(1915) in 23S rRNA + S-adenosyl-L-methionine = N(3)-methylpseudouridine(1915) in 23S rRNA + S-adenosyl-L-homocysteine + H(+)</text>
        <dbReference type="Rhea" id="RHEA:42752"/>
        <dbReference type="Rhea" id="RHEA-COMP:10221"/>
        <dbReference type="Rhea" id="RHEA-COMP:10222"/>
        <dbReference type="ChEBI" id="CHEBI:15378"/>
        <dbReference type="ChEBI" id="CHEBI:57856"/>
        <dbReference type="ChEBI" id="CHEBI:59789"/>
        <dbReference type="ChEBI" id="CHEBI:65314"/>
        <dbReference type="ChEBI" id="CHEBI:74486"/>
        <dbReference type="EC" id="2.1.1.177"/>
    </reaction>
</comment>
<comment type="subunit">
    <text evidence="1">Homodimer.</text>
</comment>
<comment type="subcellular location">
    <subcellularLocation>
        <location evidence="1">Cytoplasm</location>
    </subcellularLocation>
</comment>
<comment type="similarity">
    <text evidence="1">Belongs to the RNA methyltransferase RlmH family.</text>
</comment>